<gene>
    <name evidence="1" type="primary">ndhA</name>
    <name type="ordered locus">MoinCp076</name>
</gene>
<proteinExistence type="inferred from homology"/>
<name>NU1C_MORIN</name>
<sequence>MISHTPEVQDINSFSRFEFLKETYGIIWAFIPIFTPVLGITIGVLVIVWLEREISAGIQQRIGPEYAGPLGVLQALADGAKLLFKENLFPSRGETRLFSIGPSIAVISILVSYSVVPFGSHLVLVDLNIGVFLWIAISSIAPIGLLMSGYGSNNKYSFLGGLRAAAQSISYEIPLTLCVLSISLLSNSSSTVDIVEAQSKYGFWGWNLWRQPIGFIIFLISSLAECERLPFDLPEAEEELIAGYQTEYSGIKFGLFYVASYLNLLVSSLFVTILYLGGWNISIPYIFVFDFFEINKTYGVFEPTIGMFITLAKTYLFLFIPITTRWTLPRLRMDQLLNLGWKFLLPISLGNLLLTTSSQLFSL</sequence>
<feature type="chain" id="PRO_0000275584" description="NAD(P)H-quinone oxidoreductase subunit 1, chloroplastic">
    <location>
        <begin position="1"/>
        <end position="363"/>
    </location>
</feature>
<feature type="transmembrane region" description="Helical" evidence="1">
    <location>
        <begin position="30"/>
        <end position="50"/>
    </location>
</feature>
<feature type="transmembrane region" description="Helical" evidence="1">
    <location>
        <begin position="104"/>
        <end position="124"/>
    </location>
</feature>
<feature type="transmembrane region" description="Helical" evidence="1">
    <location>
        <begin position="129"/>
        <end position="149"/>
    </location>
</feature>
<feature type="transmembrane region" description="Helical" evidence="1">
    <location>
        <begin position="248"/>
        <end position="268"/>
    </location>
</feature>
<feature type="transmembrane region" description="Helical" evidence="1">
    <location>
        <begin position="269"/>
        <end position="289"/>
    </location>
</feature>
<feature type="transmembrane region" description="Helical" evidence="1">
    <location>
        <begin position="300"/>
        <end position="320"/>
    </location>
</feature>
<feature type="transmembrane region" description="Helical" evidence="1">
    <location>
        <begin position="336"/>
        <end position="356"/>
    </location>
</feature>
<geneLocation type="chloroplast"/>
<evidence type="ECO:0000255" key="1">
    <source>
        <dbReference type="HAMAP-Rule" id="MF_01350"/>
    </source>
</evidence>
<dbReference type="EC" id="7.1.1.-" evidence="1"/>
<dbReference type="EMBL" id="DQ226511">
    <property type="protein sequence ID" value="ABB21011.1"/>
    <property type="molecule type" value="Genomic_DNA"/>
</dbReference>
<dbReference type="RefSeq" id="YP_762315.1">
    <property type="nucleotide sequence ID" value="NC_008359.1"/>
</dbReference>
<dbReference type="SMR" id="Q09WW3"/>
<dbReference type="GeneID" id="4290612"/>
<dbReference type="GO" id="GO:0009535">
    <property type="term" value="C:chloroplast thylakoid membrane"/>
    <property type="evidence" value="ECO:0007669"/>
    <property type="project" value="UniProtKB-SubCell"/>
</dbReference>
<dbReference type="GO" id="GO:0003954">
    <property type="term" value="F:NADH dehydrogenase activity"/>
    <property type="evidence" value="ECO:0007669"/>
    <property type="project" value="TreeGrafter"/>
</dbReference>
<dbReference type="GO" id="GO:0016655">
    <property type="term" value="F:oxidoreductase activity, acting on NAD(P)H, quinone or similar compound as acceptor"/>
    <property type="evidence" value="ECO:0007669"/>
    <property type="project" value="UniProtKB-UniRule"/>
</dbReference>
<dbReference type="GO" id="GO:0048038">
    <property type="term" value="F:quinone binding"/>
    <property type="evidence" value="ECO:0007669"/>
    <property type="project" value="UniProtKB-KW"/>
</dbReference>
<dbReference type="GO" id="GO:0009060">
    <property type="term" value="P:aerobic respiration"/>
    <property type="evidence" value="ECO:0007669"/>
    <property type="project" value="TreeGrafter"/>
</dbReference>
<dbReference type="GO" id="GO:0019684">
    <property type="term" value="P:photosynthesis, light reaction"/>
    <property type="evidence" value="ECO:0007669"/>
    <property type="project" value="UniProtKB-UniRule"/>
</dbReference>
<dbReference type="HAMAP" id="MF_01350">
    <property type="entry name" value="NDH1_NuoH"/>
    <property type="match status" value="1"/>
</dbReference>
<dbReference type="InterPro" id="IPR001694">
    <property type="entry name" value="NADH_UbQ_OxRdtase_su1/FPO"/>
</dbReference>
<dbReference type="InterPro" id="IPR018086">
    <property type="entry name" value="NADH_UbQ_OxRdtase_su1_CS"/>
</dbReference>
<dbReference type="NCBIfam" id="NF004741">
    <property type="entry name" value="PRK06076.1-2"/>
    <property type="match status" value="1"/>
</dbReference>
<dbReference type="PANTHER" id="PTHR11432">
    <property type="entry name" value="NADH DEHYDROGENASE SUBUNIT 1"/>
    <property type="match status" value="1"/>
</dbReference>
<dbReference type="PANTHER" id="PTHR11432:SF3">
    <property type="entry name" value="NADH-UBIQUINONE OXIDOREDUCTASE CHAIN 1"/>
    <property type="match status" value="1"/>
</dbReference>
<dbReference type="Pfam" id="PF00146">
    <property type="entry name" value="NADHdh"/>
    <property type="match status" value="1"/>
</dbReference>
<dbReference type="PROSITE" id="PS00667">
    <property type="entry name" value="COMPLEX1_ND1_1"/>
    <property type="match status" value="1"/>
</dbReference>
<dbReference type="PROSITE" id="PS00668">
    <property type="entry name" value="COMPLEX1_ND1_2"/>
    <property type="match status" value="1"/>
</dbReference>
<comment type="function">
    <text evidence="1">NDH shuttles electrons from NAD(P)H:plastoquinone, via FMN and iron-sulfur (Fe-S) centers, to quinones in the photosynthetic chain and possibly in a chloroplast respiratory chain. The immediate electron acceptor for the enzyme in this species is believed to be plastoquinone. Couples the redox reaction to proton translocation, and thus conserves the redox energy in a proton gradient.</text>
</comment>
<comment type="catalytic activity">
    <reaction evidence="1">
        <text>a plastoquinone + NADH + (n+1) H(+)(in) = a plastoquinol + NAD(+) + n H(+)(out)</text>
        <dbReference type="Rhea" id="RHEA:42608"/>
        <dbReference type="Rhea" id="RHEA-COMP:9561"/>
        <dbReference type="Rhea" id="RHEA-COMP:9562"/>
        <dbReference type="ChEBI" id="CHEBI:15378"/>
        <dbReference type="ChEBI" id="CHEBI:17757"/>
        <dbReference type="ChEBI" id="CHEBI:57540"/>
        <dbReference type="ChEBI" id="CHEBI:57945"/>
        <dbReference type="ChEBI" id="CHEBI:62192"/>
    </reaction>
</comment>
<comment type="catalytic activity">
    <reaction evidence="1">
        <text>a plastoquinone + NADPH + (n+1) H(+)(in) = a plastoquinol + NADP(+) + n H(+)(out)</text>
        <dbReference type="Rhea" id="RHEA:42612"/>
        <dbReference type="Rhea" id="RHEA-COMP:9561"/>
        <dbReference type="Rhea" id="RHEA-COMP:9562"/>
        <dbReference type="ChEBI" id="CHEBI:15378"/>
        <dbReference type="ChEBI" id="CHEBI:17757"/>
        <dbReference type="ChEBI" id="CHEBI:57783"/>
        <dbReference type="ChEBI" id="CHEBI:58349"/>
        <dbReference type="ChEBI" id="CHEBI:62192"/>
    </reaction>
</comment>
<comment type="subunit">
    <text evidence="1">NDH is composed of at least 16 different subunits, 5 of which are encoded in the nucleus.</text>
</comment>
<comment type="subcellular location">
    <subcellularLocation>
        <location evidence="1">Plastid</location>
        <location evidence="1">Chloroplast thylakoid membrane</location>
        <topology evidence="1">Multi-pass membrane protein</topology>
    </subcellularLocation>
</comment>
<comment type="similarity">
    <text evidence="1">Belongs to the complex I subunit 1 family.</text>
</comment>
<accession>Q09WW3</accession>
<protein>
    <recommendedName>
        <fullName evidence="1">NAD(P)H-quinone oxidoreductase subunit 1, chloroplastic</fullName>
        <ecNumber evidence="1">7.1.1.-</ecNumber>
    </recommendedName>
    <alternativeName>
        <fullName evidence="1">NAD(P)H dehydrogenase subunit 1</fullName>
        <shortName evidence="1">NDH subunit 1</shortName>
    </alternativeName>
    <alternativeName>
        <fullName evidence="1">NADH-plastoquinone oxidoreductase subunit 1</fullName>
    </alternativeName>
</protein>
<organism>
    <name type="scientific">Morus indica</name>
    <name type="common">Mulberry</name>
    <dbReference type="NCBI Taxonomy" id="248361"/>
    <lineage>
        <taxon>Eukaryota</taxon>
        <taxon>Viridiplantae</taxon>
        <taxon>Streptophyta</taxon>
        <taxon>Embryophyta</taxon>
        <taxon>Tracheophyta</taxon>
        <taxon>Spermatophyta</taxon>
        <taxon>Magnoliopsida</taxon>
        <taxon>eudicotyledons</taxon>
        <taxon>Gunneridae</taxon>
        <taxon>Pentapetalae</taxon>
        <taxon>rosids</taxon>
        <taxon>fabids</taxon>
        <taxon>Rosales</taxon>
        <taxon>Moraceae</taxon>
        <taxon>Moreae</taxon>
        <taxon>Morus</taxon>
    </lineage>
</organism>
<reference key="1">
    <citation type="submission" date="2005-09" db="EMBL/GenBank/DDBJ databases">
        <title>The chloroplast genome of mulberry: structural features and comparative analysis.</title>
        <authorList>
            <person name="Ravi V."/>
            <person name="Khurana J.P."/>
            <person name="Tyagi A.K."/>
            <person name="Khurana P."/>
        </authorList>
    </citation>
    <scope>NUCLEOTIDE SEQUENCE [LARGE SCALE GENOMIC DNA]</scope>
    <source>
        <strain>cv. K2</strain>
    </source>
</reference>
<keyword id="KW-0150">Chloroplast</keyword>
<keyword id="KW-0472">Membrane</keyword>
<keyword id="KW-0520">NAD</keyword>
<keyword id="KW-0521">NADP</keyword>
<keyword id="KW-0934">Plastid</keyword>
<keyword id="KW-0618">Plastoquinone</keyword>
<keyword id="KW-0874">Quinone</keyword>
<keyword id="KW-0793">Thylakoid</keyword>
<keyword id="KW-1278">Translocase</keyword>
<keyword id="KW-0812">Transmembrane</keyword>
<keyword id="KW-1133">Transmembrane helix</keyword>